<comment type="function">
    <text evidence="1">This is one of the proteins that binds to the 5S RNA in the ribosome where it forms part of the central protuberance.</text>
</comment>
<comment type="subunit">
    <text evidence="1">Part of the 50S ribosomal subunit; part of the 5S rRNA/L5/L18/L25 subcomplex. Contacts the 5S rRNA. Binds to the 5S rRNA independently of L5 and L18.</text>
</comment>
<comment type="similarity">
    <text evidence="1">Belongs to the bacterial ribosomal protein bL25 family. CTC subfamily.</text>
</comment>
<organism>
    <name type="scientific">Staphylococcus aureus (strain USA300)</name>
    <dbReference type="NCBI Taxonomy" id="367830"/>
    <lineage>
        <taxon>Bacteria</taxon>
        <taxon>Bacillati</taxon>
        <taxon>Bacillota</taxon>
        <taxon>Bacilli</taxon>
        <taxon>Bacillales</taxon>
        <taxon>Staphylococcaceae</taxon>
        <taxon>Staphylococcus</taxon>
    </lineage>
</organism>
<dbReference type="EMBL" id="CP000255">
    <property type="protein sequence ID" value="ABD22748.1"/>
    <property type="molecule type" value="Genomic_DNA"/>
</dbReference>
<dbReference type="RefSeq" id="WP_000157650.1">
    <property type="nucleotide sequence ID" value="NZ_CP027476.1"/>
</dbReference>
<dbReference type="PDB" id="4WCE">
    <property type="method" value="X-ray"/>
    <property type="resolution" value="3.53 A"/>
    <property type="chains" value="S=1-217"/>
</dbReference>
<dbReference type="PDB" id="4WF9">
    <property type="method" value="X-ray"/>
    <property type="resolution" value="3.43 A"/>
    <property type="chains" value="S=1-217"/>
</dbReference>
<dbReference type="PDB" id="4WFA">
    <property type="method" value="X-ray"/>
    <property type="resolution" value="3.39 A"/>
    <property type="chains" value="S=1-217"/>
</dbReference>
<dbReference type="PDB" id="4WFB">
    <property type="method" value="X-ray"/>
    <property type="resolution" value="3.43 A"/>
    <property type="chains" value="S=1-217"/>
</dbReference>
<dbReference type="PDB" id="5HKV">
    <property type="method" value="X-ray"/>
    <property type="resolution" value="3.66 A"/>
    <property type="chains" value="S=1-217"/>
</dbReference>
<dbReference type="PDB" id="6DDG">
    <property type="method" value="EM"/>
    <property type="resolution" value="3.10 A"/>
    <property type="chains" value="H=1-217"/>
</dbReference>
<dbReference type="PDB" id="6HMA">
    <property type="method" value="EM"/>
    <property type="resolution" value="2.65 A"/>
    <property type="chains" value="T=2-95"/>
</dbReference>
<dbReference type="PDB" id="7ASM">
    <property type="method" value="EM"/>
    <property type="resolution" value="2.48 A"/>
    <property type="chains" value="T=2-95"/>
</dbReference>
<dbReference type="PDB" id="7ASN">
    <property type="method" value="EM"/>
    <property type="resolution" value="2.73 A"/>
    <property type="chains" value="T=2-95"/>
</dbReference>
<dbReference type="PDB" id="7TTU">
    <property type="method" value="EM"/>
    <property type="resolution" value="3.00 A"/>
    <property type="chains" value="H=1-217"/>
</dbReference>
<dbReference type="PDB" id="7TTW">
    <property type="method" value="EM"/>
    <property type="resolution" value="2.90 A"/>
    <property type="chains" value="H=1-217"/>
</dbReference>
<dbReference type="PDBsum" id="4WCE"/>
<dbReference type="PDBsum" id="4WF9"/>
<dbReference type="PDBsum" id="4WFA"/>
<dbReference type="PDBsum" id="4WFB"/>
<dbReference type="PDBsum" id="5HKV"/>
<dbReference type="PDBsum" id="6DDG"/>
<dbReference type="PDBsum" id="6HMA"/>
<dbReference type="PDBsum" id="7ASM"/>
<dbReference type="PDBsum" id="7ASN"/>
<dbReference type="PDBsum" id="7TTU"/>
<dbReference type="PDBsum" id="7TTW"/>
<dbReference type="SMR" id="Q2FJE0"/>
<dbReference type="KEGG" id="saa:SAUSA300_0479"/>
<dbReference type="HOGENOM" id="CLU_075939_2_1_9"/>
<dbReference type="OMA" id="CLPADIP"/>
<dbReference type="Proteomes" id="UP000001939">
    <property type="component" value="Chromosome"/>
</dbReference>
<dbReference type="GO" id="GO:0022625">
    <property type="term" value="C:cytosolic large ribosomal subunit"/>
    <property type="evidence" value="ECO:0007669"/>
    <property type="project" value="TreeGrafter"/>
</dbReference>
<dbReference type="GO" id="GO:0008097">
    <property type="term" value="F:5S rRNA binding"/>
    <property type="evidence" value="ECO:0007669"/>
    <property type="project" value="InterPro"/>
</dbReference>
<dbReference type="GO" id="GO:0003735">
    <property type="term" value="F:structural constituent of ribosome"/>
    <property type="evidence" value="ECO:0007669"/>
    <property type="project" value="InterPro"/>
</dbReference>
<dbReference type="GO" id="GO:0006412">
    <property type="term" value="P:translation"/>
    <property type="evidence" value="ECO:0007669"/>
    <property type="project" value="UniProtKB-UniRule"/>
</dbReference>
<dbReference type="CDD" id="cd00495">
    <property type="entry name" value="Ribosomal_L25_TL5_CTC"/>
    <property type="match status" value="1"/>
</dbReference>
<dbReference type="FunFam" id="2.40.240.10:FF:000013">
    <property type="entry name" value="50S ribosomal protein L25"/>
    <property type="match status" value="1"/>
</dbReference>
<dbReference type="Gene3D" id="2.170.120.20">
    <property type="entry name" value="Ribosomal protein L25, beta domain"/>
    <property type="match status" value="1"/>
</dbReference>
<dbReference type="Gene3D" id="2.40.240.10">
    <property type="entry name" value="Ribosomal Protein L25, Chain P"/>
    <property type="match status" value="1"/>
</dbReference>
<dbReference type="HAMAP" id="MF_01334">
    <property type="entry name" value="Ribosomal_bL25_CTC"/>
    <property type="match status" value="1"/>
</dbReference>
<dbReference type="InterPro" id="IPR020056">
    <property type="entry name" value="Rbsml_bL25/Gln-tRNA_synth_N"/>
</dbReference>
<dbReference type="InterPro" id="IPR011035">
    <property type="entry name" value="Ribosomal_bL25/Gln-tRNA_synth"/>
</dbReference>
<dbReference type="InterPro" id="IPR020057">
    <property type="entry name" value="Ribosomal_bL25_b-dom"/>
</dbReference>
<dbReference type="InterPro" id="IPR037121">
    <property type="entry name" value="Ribosomal_bL25_C"/>
</dbReference>
<dbReference type="InterPro" id="IPR001021">
    <property type="entry name" value="Ribosomal_bL25_long"/>
</dbReference>
<dbReference type="InterPro" id="IPR029751">
    <property type="entry name" value="Ribosomal_L25_dom"/>
</dbReference>
<dbReference type="InterPro" id="IPR020930">
    <property type="entry name" value="Ribosomal_uL5_bac-type"/>
</dbReference>
<dbReference type="NCBIfam" id="TIGR00731">
    <property type="entry name" value="bL25_bact_ctc"/>
    <property type="match status" value="1"/>
</dbReference>
<dbReference type="NCBIfam" id="NF004133">
    <property type="entry name" value="PRK05618.2-4"/>
    <property type="match status" value="1"/>
</dbReference>
<dbReference type="NCBIfam" id="NF004134">
    <property type="entry name" value="PRK05618.2-5"/>
    <property type="match status" value="1"/>
</dbReference>
<dbReference type="PANTHER" id="PTHR33284">
    <property type="entry name" value="RIBOSOMAL PROTEIN L25/GLN-TRNA SYNTHETASE, ANTI-CODON-BINDING DOMAIN-CONTAINING PROTEIN"/>
    <property type="match status" value="1"/>
</dbReference>
<dbReference type="PANTHER" id="PTHR33284:SF1">
    <property type="entry name" value="RIBOSOMAL PROTEIN L25_GLN-TRNA SYNTHETASE, ANTI-CODON-BINDING DOMAIN-CONTAINING PROTEIN"/>
    <property type="match status" value="1"/>
</dbReference>
<dbReference type="Pfam" id="PF01386">
    <property type="entry name" value="Ribosomal_L25p"/>
    <property type="match status" value="1"/>
</dbReference>
<dbReference type="Pfam" id="PF14693">
    <property type="entry name" value="Ribosomal_TL5_C"/>
    <property type="match status" value="1"/>
</dbReference>
<dbReference type="SUPFAM" id="SSF50715">
    <property type="entry name" value="Ribosomal protein L25-like"/>
    <property type="match status" value="1"/>
</dbReference>
<evidence type="ECO:0000255" key="1">
    <source>
        <dbReference type="HAMAP-Rule" id="MF_01334"/>
    </source>
</evidence>
<evidence type="ECO:0000256" key="2">
    <source>
        <dbReference type="SAM" id="MobiDB-lite"/>
    </source>
</evidence>
<evidence type="ECO:0000305" key="3"/>
<evidence type="ECO:0007829" key="4">
    <source>
        <dbReference type="PDB" id="4WF9"/>
    </source>
</evidence>
<evidence type="ECO:0007829" key="5">
    <source>
        <dbReference type="PDB" id="4WFA"/>
    </source>
</evidence>
<evidence type="ECO:0007829" key="6">
    <source>
        <dbReference type="PDB" id="7ASM"/>
    </source>
</evidence>
<evidence type="ECO:0007829" key="7">
    <source>
        <dbReference type="PDB" id="7TTW"/>
    </source>
</evidence>
<feature type="chain" id="PRO_0000244244" description="Large ribosomal subunit protein bL25">
    <location>
        <begin position="1"/>
        <end position="217"/>
    </location>
</feature>
<feature type="region of interest" description="Disordered" evidence="2">
    <location>
        <begin position="178"/>
        <end position="217"/>
    </location>
</feature>
<feature type="compositionally biased region" description="Acidic residues" evidence="2">
    <location>
        <begin position="184"/>
        <end position="205"/>
    </location>
</feature>
<feature type="compositionally biased region" description="Basic and acidic residues" evidence="2">
    <location>
        <begin position="206"/>
        <end position="217"/>
    </location>
</feature>
<feature type="strand" evidence="6">
    <location>
        <begin position="3"/>
        <end position="5"/>
    </location>
</feature>
<feature type="helix" evidence="6">
    <location>
        <begin position="15"/>
        <end position="23"/>
    </location>
</feature>
<feature type="strand" evidence="6">
    <location>
        <begin position="26"/>
        <end position="33"/>
    </location>
</feature>
<feature type="strand" evidence="7">
    <location>
        <begin position="34"/>
        <end position="36"/>
    </location>
</feature>
<feature type="strand" evidence="6">
    <location>
        <begin position="39"/>
        <end position="44"/>
    </location>
</feature>
<feature type="helix" evidence="6">
    <location>
        <begin position="45"/>
        <end position="55"/>
    </location>
</feature>
<feature type="strand" evidence="6">
    <location>
        <begin position="61"/>
        <end position="65"/>
    </location>
</feature>
<feature type="strand" evidence="6">
    <location>
        <begin position="68"/>
        <end position="80"/>
    </location>
</feature>
<feature type="turn" evidence="6">
    <location>
        <begin position="81"/>
        <end position="84"/>
    </location>
</feature>
<feature type="strand" evidence="6">
    <location>
        <begin position="85"/>
        <end position="93"/>
    </location>
</feature>
<feature type="strand" evidence="5">
    <location>
        <begin position="99"/>
        <end position="103"/>
    </location>
</feature>
<feature type="strand" evidence="4">
    <location>
        <begin position="114"/>
        <end position="116"/>
    </location>
</feature>
<feature type="strand" evidence="5">
    <location>
        <begin position="121"/>
        <end position="131"/>
    </location>
</feature>
<feature type="strand" evidence="4">
    <location>
        <begin position="134"/>
        <end position="136"/>
    </location>
</feature>
<feature type="strand" evidence="5">
    <location>
        <begin position="144"/>
        <end position="146"/>
    </location>
</feature>
<feature type="strand" evidence="5">
    <location>
        <begin position="156"/>
        <end position="158"/>
    </location>
</feature>
<reference key="1">
    <citation type="journal article" date="2006" name="Lancet">
        <title>Complete genome sequence of USA300, an epidemic clone of community-acquired meticillin-resistant Staphylococcus aureus.</title>
        <authorList>
            <person name="Diep B.A."/>
            <person name="Gill S.R."/>
            <person name="Chang R.F."/>
            <person name="Phan T.H."/>
            <person name="Chen J.H."/>
            <person name="Davidson M.G."/>
            <person name="Lin F."/>
            <person name="Lin J."/>
            <person name="Carleton H.A."/>
            <person name="Mongodin E.F."/>
            <person name="Sensabaugh G.F."/>
            <person name="Perdreau-Remington F."/>
        </authorList>
    </citation>
    <scope>NUCLEOTIDE SEQUENCE [LARGE SCALE GENOMIC DNA]</scope>
    <source>
        <strain>USA300</strain>
    </source>
</reference>
<keyword id="KW-0002">3D-structure</keyword>
<keyword id="KW-0687">Ribonucleoprotein</keyword>
<keyword id="KW-0689">Ribosomal protein</keyword>
<keyword id="KW-0694">RNA-binding</keyword>
<keyword id="KW-0699">rRNA-binding</keyword>
<sequence length="217" mass="23788">MASLKSIIRQGKQTRSDLKQLRKSGKVPAVVYGYGTKNVSVKVDEVEFIKVIREVGRNGVIELGVGSKTIKVMVADYQFDPLKNQITHIDFLAINMSEERTVEVPVQLVGEAVGAKEGGVVEQPLFNLEVTATPDNIPEAIEVDITELNINDSLTVADVKVTGDFKIENDSAESVVTVVAPTEEPTEEEIEAMEGEQQTEEPEVVGESKEDEEKTEE</sequence>
<accession>Q2FJE0</accession>
<gene>
    <name evidence="1" type="primary">rplY</name>
    <name evidence="1" type="synonym">ctc</name>
    <name type="ordered locus">SAUSA300_0479</name>
</gene>
<name>RL25_STAA3</name>
<proteinExistence type="evidence at protein level"/>
<protein>
    <recommendedName>
        <fullName evidence="1">Large ribosomal subunit protein bL25</fullName>
    </recommendedName>
    <alternativeName>
        <fullName evidence="3">50S ribosomal protein L25</fullName>
    </alternativeName>
    <alternativeName>
        <fullName evidence="1">General stress protein CTC</fullName>
    </alternativeName>
</protein>